<evidence type="ECO:0000255" key="1">
    <source>
        <dbReference type="HAMAP-Rule" id="MF_01321"/>
    </source>
</evidence>
<evidence type="ECO:0000256" key="2">
    <source>
        <dbReference type="SAM" id="MobiDB-lite"/>
    </source>
</evidence>
<gene>
    <name evidence="1" type="primary">rpoB</name>
    <name type="ordered locus">lmo0258</name>
</gene>
<reference key="1">
    <citation type="journal article" date="1999" name="J. Clin. Microbiol.">
        <title>Isolation of rifampin-resistant mutants of Listeria monocytogenes and their characterization by rpoB gene sequencing, temperature sensitivity for growth, and interaction with an epithelial cell line.</title>
        <authorList>
            <person name="Morse R."/>
            <person name="O'Hanlon K."/>
            <person name="Virji M."/>
            <person name="Collins M.D."/>
        </authorList>
    </citation>
    <scope>NUCLEOTIDE SEQUENCE [GENOMIC DNA]</scope>
    <scope>VARIANTS RIFAMPICIN RESISTANT</scope>
    <source>
        <strain>ATCC 35152 / LMG 10470 / NCTC 7973</strain>
    </source>
</reference>
<reference key="2">
    <citation type="journal article" date="2002" name="Int. J. Syst. Evol. Microbiol.">
        <title>Phylogenetic, amino acid content and indel analyses of the beta subunit of DNA-dependent RNA polymerase of Gram-positive and Gram-negative bacteria.</title>
        <authorList>
            <person name="Morse R."/>
            <person name="O'Hanlon K."/>
            <person name="Collins M.D."/>
        </authorList>
    </citation>
    <scope>NUCLEOTIDE SEQUENCE [GENOMIC DNA]</scope>
    <source>
        <strain>ATCC 35152 / LMG 10470 / NCTC 7973</strain>
    </source>
</reference>
<reference key="3">
    <citation type="journal article" date="2001" name="Science">
        <title>Comparative genomics of Listeria species.</title>
        <authorList>
            <person name="Glaser P."/>
            <person name="Frangeul L."/>
            <person name="Buchrieser C."/>
            <person name="Rusniok C."/>
            <person name="Amend A."/>
            <person name="Baquero F."/>
            <person name="Berche P."/>
            <person name="Bloecker H."/>
            <person name="Brandt P."/>
            <person name="Chakraborty T."/>
            <person name="Charbit A."/>
            <person name="Chetouani F."/>
            <person name="Couve E."/>
            <person name="de Daruvar A."/>
            <person name="Dehoux P."/>
            <person name="Domann E."/>
            <person name="Dominguez-Bernal G."/>
            <person name="Duchaud E."/>
            <person name="Durant L."/>
            <person name="Dussurget O."/>
            <person name="Entian K.-D."/>
            <person name="Fsihi H."/>
            <person name="Garcia-del Portillo F."/>
            <person name="Garrido P."/>
            <person name="Gautier L."/>
            <person name="Goebel W."/>
            <person name="Gomez-Lopez N."/>
            <person name="Hain T."/>
            <person name="Hauf J."/>
            <person name="Jackson D."/>
            <person name="Jones L.-M."/>
            <person name="Kaerst U."/>
            <person name="Kreft J."/>
            <person name="Kuhn M."/>
            <person name="Kunst F."/>
            <person name="Kurapkat G."/>
            <person name="Madueno E."/>
            <person name="Maitournam A."/>
            <person name="Mata Vicente J."/>
            <person name="Ng E."/>
            <person name="Nedjari H."/>
            <person name="Nordsiek G."/>
            <person name="Novella S."/>
            <person name="de Pablos B."/>
            <person name="Perez-Diaz J.-C."/>
            <person name="Purcell R."/>
            <person name="Remmel B."/>
            <person name="Rose M."/>
            <person name="Schlueter T."/>
            <person name="Simoes N."/>
            <person name="Tierrez A."/>
            <person name="Vazquez-Boland J.-A."/>
            <person name="Voss H."/>
            <person name="Wehland J."/>
            <person name="Cossart P."/>
        </authorList>
    </citation>
    <scope>NUCLEOTIDE SEQUENCE [LARGE SCALE GENOMIC DNA]</scope>
    <source>
        <strain>ATCC BAA-679 / EGD-e</strain>
    </source>
</reference>
<organism>
    <name type="scientific">Listeria monocytogenes serovar 1/2a (strain ATCC BAA-679 / EGD-e)</name>
    <dbReference type="NCBI Taxonomy" id="169963"/>
    <lineage>
        <taxon>Bacteria</taxon>
        <taxon>Bacillati</taxon>
        <taxon>Bacillota</taxon>
        <taxon>Bacilli</taxon>
        <taxon>Bacillales</taxon>
        <taxon>Listeriaceae</taxon>
        <taxon>Listeria</taxon>
    </lineage>
</organism>
<keyword id="KW-0046">Antibiotic resistance</keyword>
<keyword id="KW-0240">DNA-directed RNA polymerase</keyword>
<keyword id="KW-0548">Nucleotidyltransferase</keyword>
<keyword id="KW-1185">Reference proteome</keyword>
<keyword id="KW-0804">Transcription</keyword>
<keyword id="KW-0808">Transferase</keyword>
<feature type="chain" id="PRO_0000047917" description="DNA-directed RNA polymerase subunit beta">
    <location>
        <begin position="1"/>
        <end position="1184"/>
    </location>
</feature>
<feature type="region of interest" description="Disordered" evidence="2">
    <location>
        <begin position="1160"/>
        <end position="1184"/>
    </location>
</feature>
<feature type="sequence variant" description="Rifampicin resistant.">
    <original>D</original>
    <variation>N</variation>
    <location>
        <position position="473"/>
    </location>
</feature>
<feature type="sequence variant" description="Rifampicin resistant.">
    <original>G</original>
    <variation>D</variation>
    <location>
        <position position="479"/>
    </location>
</feature>
<feature type="sequence variant" description="Rifampicin resistant.">
    <original>H</original>
    <variation>L</variation>
    <location>
        <position position="483"/>
    </location>
</feature>
<feature type="sequence variant" description="Rifampicin resistant.">
    <original>H</original>
    <variation>Y</variation>
    <location>
        <position position="483"/>
    </location>
</feature>
<feature type="sequence variant" description="Rifampicin resistant.">
    <original>L</original>
    <variation>F</variation>
    <location>
        <position position="528"/>
    </location>
</feature>
<feature type="sequence variant" description="Rifampicin resistant.">
    <original>N</original>
    <variation>Y</variation>
    <location>
        <position position="530"/>
    </location>
</feature>
<sequence length="1184" mass="132604">MSGHSGHDVKYGRHRTRRSFARISEVLELPNLIEIQTASYQWFLDEGLREMFRDISPIEDFAGNLSLEFIDYDLGEPKYSVEESKNRDANYAAPLRVKLRLINKETGEVKDQEVFMGDFPLMTEMGTFIINGAERVIVSQLVRSPGVYFNGKLDKNGKKGFGSTVIPNRGAWLEYETDAKDVVHVRIDRTRKLPVTVLLRALGFGSDQEIIDLIGDNDYLRNTLEKDNTDNAEKALLEIYERLRPGEPPTVDNARSLLVSRFFDPKRYDLASVGRYKINKKLHLKNRLFNQTLAETLVDPETGEIIASKGDILDRRNLDQIIPNLENGVGFRTLRPTDGVMEDSVLVQSIKIYAPNDEEKEINIIGNAYIEENVKHITPSDIISSISYFFNLLHGVGDTDDIDHLGNRRLRSVGELLQNQFRIGLSRMERVVRERMSIQDMTTITPQQLINIRPVVASIKEFFGSSQLSQFMDQTNPLGELTHKRRLSALGPGGLTRERAGYEVRDVHYSHYGRMCPIETPEGPNIGLINSLSSFAKVNKFGFIETPYRRVDPETNRVTDKIDYLTADEEDNYVVAQANSKLDEQGTFTEEEVMARFRSENLAVEKERIDYMDVSPKQVVSVATACIPFLENDDSNRALMGANMQRQAVPLMHPEAPFVGTGMEHVSAKDSGAAVTAKHDGIVEHVEAREIWVRRVSLVDGKEVTGGIDKYTLRKFVRSNQGTCYNQRPNVAEGDRVVKGEILGNGPSMDSGELALGRNVLVAFMTWDGYNYEDAIIMSERLVKDDVYTSIHIEEFESEARDTKLGPEEMTRDIPNVGEDALRDLDERGIIRVGAEVKDNDLLVGKVTPKGVTELTAEERLLHAIFGEKAREVRDTSLRVPHGGGGIVLDVKIFTREAGDELPPGVNQLVRVYIVQKRKIHEGDKMAGRHGNKGVISRILPEEDMPFMPDGTPVDIMLNPLGVPSRMNIGQVLELHLGMAARALGIHVATPVFDGANEEDVWSTVEEAGMARDAKTILYDGRSGEAFDNRISVGVMYMIKLAHMVDDKLHARSTGPYSLVTQQPLGGKAQFGGQRFGEMEVWALEAYGAAYTLQEILTIKSDDVVGRVKTYEAIVKGESVPEPGVPESFKVLIKELQSLGMDVKMLSADEEEIEMRDMDDDDFTNQNDAFNIVQPENAAAEKTE</sequence>
<dbReference type="EC" id="2.7.7.6" evidence="1"/>
<dbReference type="EMBL" id="Y16468">
    <property type="protein sequence ID" value="CAB56706.1"/>
    <property type="molecule type" value="Genomic_DNA"/>
</dbReference>
<dbReference type="EMBL" id="AL591974">
    <property type="protein sequence ID" value="CAD00785.1"/>
    <property type="molecule type" value="Genomic_DNA"/>
</dbReference>
<dbReference type="PIR" id="AC1107">
    <property type="entry name" value="AC1107"/>
</dbReference>
<dbReference type="RefSeq" id="NP_463789.1">
    <property type="nucleotide sequence ID" value="NC_003210.1"/>
</dbReference>
<dbReference type="RefSeq" id="WP_003723045.1">
    <property type="nucleotide sequence ID" value="NZ_CP149495.1"/>
</dbReference>
<dbReference type="SMR" id="Q9RLT9"/>
<dbReference type="STRING" id="169963.gene:17592909"/>
<dbReference type="PaxDb" id="169963-lmo0258"/>
<dbReference type="EnsemblBacteria" id="CAD00785">
    <property type="protein sequence ID" value="CAD00785"/>
    <property type="gene ID" value="CAD00785"/>
</dbReference>
<dbReference type="GeneID" id="987342"/>
<dbReference type="KEGG" id="lmo:lmo0258"/>
<dbReference type="PATRIC" id="fig|169963.11.peg.266"/>
<dbReference type="eggNOG" id="COG0085">
    <property type="taxonomic scope" value="Bacteria"/>
</dbReference>
<dbReference type="HOGENOM" id="CLU_000524_4_1_9"/>
<dbReference type="OrthoDB" id="9803954at2"/>
<dbReference type="PhylomeDB" id="Q9RLT9"/>
<dbReference type="BioCyc" id="LMON169963:LMO0258-MONOMER"/>
<dbReference type="BRENDA" id="2.7.9.6">
    <property type="organism ID" value="3045"/>
</dbReference>
<dbReference type="Proteomes" id="UP000000817">
    <property type="component" value="Chromosome"/>
</dbReference>
<dbReference type="GO" id="GO:0000428">
    <property type="term" value="C:DNA-directed RNA polymerase complex"/>
    <property type="evidence" value="ECO:0007669"/>
    <property type="project" value="UniProtKB-KW"/>
</dbReference>
<dbReference type="GO" id="GO:0003677">
    <property type="term" value="F:DNA binding"/>
    <property type="evidence" value="ECO:0007669"/>
    <property type="project" value="UniProtKB-UniRule"/>
</dbReference>
<dbReference type="GO" id="GO:0003899">
    <property type="term" value="F:DNA-directed RNA polymerase activity"/>
    <property type="evidence" value="ECO:0007669"/>
    <property type="project" value="UniProtKB-UniRule"/>
</dbReference>
<dbReference type="GO" id="GO:0032549">
    <property type="term" value="F:ribonucleoside binding"/>
    <property type="evidence" value="ECO:0007669"/>
    <property type="project" value="InterPro"/>
</dbReference>
<dbReference type="GO" id="GO:0006351">
    <property type="term" value="P:DNA-templated transcription"/>
    <property type="evidence" value="ECO:0007669"/>
    <property type="project" value="UniProtKB-UniRule"/>
</dbReference>
<dbReference type="GO" id="GO:0046677">
    <property type="term" value="P:response to antibiotic"/>
    <property type="evidence" value="ECO:0007669"/>
    <property type="project" value="UniProtKB-KW"/>
</dbReference>
<dbReference type="CDD" id="cd00653">
    <property type="entry name" value="RNA_pol_B_RPB2"/>
    <property type="match status" value="1"/>
</dbReference>
<dbReference type="FunFam" id="3.90.1800.10:FF:000001">
    <property type="entry name" value="DNA-directed RNA polymerase subunit beta"/>
    <property type="match status" value="1"/>
</dbReference>
<dbReference type="Gene3D" id="2.40.50.100">
    <property type="match status" value="1"/>
</dbReference>
<dbReference type="Gene3D" id="2.40.50.150">
    <property type="match status" value="1"/>
</dbReference>
<dbReference type="Gene3D" id="3.90.1100.10">
    <property type="match status" value="2"/>
</dbReference>
<dbReference type="Gene3D" id="2.30.150.10">
    <property type="entry name" value="DNA-directed RNA polymerase, beta subunit, external 1 domain"/>
    <property type="match status" value="1"/>
</dbReference>
<dbReference type="Gene3D" id="2.40.270.10">
    <property type="entry name" value="DNA-directed RNA polymerase, subunit 2, domain 6"/>
    <property type="match status" value="2"/>
</dbReference>
<dbReference type="Gene3D" id="3.90.1800.10">
    <property type="entry name" value="RNA polymerase alpha subunit dimerisation domain"/>
    <property type="match status" value="1"/>
</dbReference>
<dbReference type="Gene3D" id="3.90.1110.10">
    <property type="entry name" value="RNA polymerase Rpb2, domain 2"/>
    <property type="match status" value="2"/>
</dbReference>
<dbReference type="HAMAP" id="MF_01321">
    <property type="entry name" value="RNApol_bact_RpoB"/>
    <property type="match status" value="1"/>
</dbReference>
<dbReference type="InterPro" id="IPR042107">
    <property type="entry name" value="DNA-dir_RNA_pol_bsu_ext_1_sf"/>
</dbReference>
<dbReference type="InterPro" id="IPR019462">
    <property type="entry name" value="DNA-dir_RNA_pol_bsu_external_1"/>
</dbReference>
<dbReference type="InterPro" id="IPR015712">
    <property type="entry name" value="DNA-dir_RNA_pol_su2"/>
</dbReference>
<dbReference type="InterPro" id="IPR007120">
    <property type="entry name" value="DNA-dir_RNAP_su2_dom"/>
</dbReference>
<dbReference type="InterPro" id="IPR037033">
    <property type="entry name" value="DNA-dir_RNAP_su2_hyb_sf"/>
</dbReference>
<dbReference type="InterPro" id="IPR010243">
    <property type="entry name" value="RNA_pol_bsu_bac"/>
</dbReference>
<dbReference type="InterPro" id="IPR007121">
    <property type="entry name" value="RNA_pol_bsu_CS"/>
</dbReference>
<dbReference type="InterPro" id="IPR007644">
    <property type="entry name" value="RNA_pol_bsu_protrusion"/>
</dbReference>
<dbReference type="InterPro" id="IPR007642">
    <property type="entry name" value="RNA_pol_Rpb2_2"/>
</dbReference>
<dbReference type="InterPro" id="IPR037034">
    <property type="entry name" value="RNA_pol_Rpb2_2_sf"/>
</dbReference>
<dbReference type="InterPro" id="IPR007645">
    <property type="entry name" value="RNA_pol_Rpb2_3"/>
</dbReference>
<dbReference type="InterPro" id="IPR007641">
    <property type="entry name" value="RNA_pol_Rpb2_7"/>
</dbReference>
<dbReference type="InterPro" id="IPR014724">
    <property type="entry name" value="RNA_pol_RPB2_OB-fold"/>
</dbReference>
<dbReference type="NCBIfam" id="NF001616">
    <property type="entry name" value="PRK00405.1"/>
    <property type="match status" value="1"/>
</dbReference>
<dbReference type="NCBIfam" id="TIGR02013">
    <property type="entry name" value="rpoB"/>
    <property type="match status" value="1"/>
</dbReference>
<dbReference type="PANTHER" id="PTHR20856">
    <property type="entry name" value="DNA-DIRECTED RNA POLYMERASE I SUBUNIT 2"/>
    <property type="match status" value="1"/>
</dbReference>
<dbReference type="Pfam" id="PF04563">
    <property type="entry name" value="RNA_pol_Rpb2_1"/>
    <property type="match status" value="1"/>
</dbReference>
<dbReference type="Pfam" id="PF04561">
    <property type="entry name" value="RNA_pol_Rpb2_2"/>
    <property type="match status" value="2"/>
</dbReference>
<dbReference type="Pfam" id="PF04565">
    <property type="entry name" value="RNA_pol_Rpb2_3"/>
    <property type="match status" value="1"/>
</dbReference>
<dbReference type="Pfam" id="PF10385">
    <property type="entry name" value="RNA_pol_Rpb2_45"/>
    <property type="match status" value="1"/>
</dbReference>
<dbReference type="Pfam" id="PF00562">
    <property type="entry name" value="RNA_pol_Rpb2_6"/>
    <property type="match status" value="1"/>
</dbReference>
<dbReference type="Pfam" id="PF04560">
    <property type="entry name" value="RNA_pol_Rpb2_7"/>
    <property type="match status" value="1"/>
</dbReference>
<dbReference type="SUPFAM" id="SSF64484">
    <property type="entry name" value="beta and beta-prime subunits of DNA dependent RNA-polymerase"/>
    <property type="match status" value="1"/>
</dbReference>
<dbReference type="PROSITE" id="PS01166">
    <property type="entry name" value="RNA_POL_BETA"/>
    <property type="match status" value="1"/>
</dbReference>
<name>RPOB_LISMO</name>
<protein>
    <recommendedName>
        <fullName evidence="1">DNA-directed RNA polymerase subunit beta</fullName>
        <shortName evidence="1">RNAP subunit beta</shortName>
        <ecNumber evidence="1">2.7.7.6</ecNumber>
    </recommendedName>
    <alternativeName>
        <fullName evidence="1">RNA polymerase subunit beta</fullName>
    </alternativeName>
    <alternativeName>
        <fullName evidence="1">Transcriptase subunit beta</fullName>
    </alternativeName>
</protein>
<comment type="function">
    <text evidence="1">DNA-dependent RNA polymerase catalyzes the transcription of DNA into RNA using the four ribonucleoside triphosphates as substrates.</text>
</comment>
<comment type="catalytic activity">
    <reaction evidence="1">
        <text>RNA(n) + a ribonucleoside 5'-triphosphate = RNA(n+1) + diphosphate</text>
        <dbReference type="Rhea" id="RHEA:21248"/>
        <dbReference type="Rhea" id="RHEA-COMP:14527"/>
        <dbReference type="Rhea" id="RHEA-COMP:17342"/>
        <dbReference type="ChEBI" id="CHEBI:33019"/>
        <dbReference type="ChEBI" id="CHEBI:61557"/>
        <dbReference type="ChEBI" id="CHEBI:140395"/>
        <dbReference type="EC" id="2.7.7.6"/>
    </reaction>
</comment>
<comment type="subunit">
    <text evidence="1">The RNAP catalytic core consists of 2 alpha, 1 beta, 1 beta' and 1 omega subunit. When a sigma factor is associated with the core the holoenzyme is formed, which can initiate transcription.</text>
</comment>
<comment type="similarity">
    <text evidence="1">Belongs to the RNA polymerase beta chain family.</text>
</comment>
<accession>Q9RLT9</accession>
<proteinExistence type="inferred from homology"/>